<accession>P47516</accession>
<protein>
    <recommendedName>
        <fullName>Pyruvate dehydrogenase E1 component subunit alpha</fullName>
        <ecNumber>1.2.4.1</ecNumber>
    </recommendedName>
</protein>
<feature type="chain" id="PRO_0000162200" description="Pyruvate dehydrogenase E1 component subunit alpha">
    <location>
        <begin position="1"/>
        <end position="358"/>
    </location>
</feature>
<proteinExistence type="inferred from homology"/>
<comment type="function">
    <text evidence="1">The pyruvate dehydrogenase complex catalyzes the overall conversion of pyruvate to acetyl-CoA and CO(2). It contains multiple copies of three enzymatic components: pyruvate dehydrogenase (E1), dihydrolipoamide acetyltransferase (E2) and lipoamide dehydrogenase (E3) (By similarity).</text>
</comment>
<comment type="catalytic activity">
    <reaction>
        <text>N(6)-[(R)-lipoyl]-L-lysyl-[protein] + pyruvate + H(+) = N(6)-[(R)-S(8)-acetyldihydrolipoyl]-L-lysyl-[protein] + CO2</text>
        <dbReference type="Rhea" id="RHEA:19189"/>
        <dbReference type="Rhea" id="RHEA-COMP:10474"/>
        <dbReference type="Rhea" id="RHEA-COMP:10478"/>
        <dbReference type="ChEBI" id="CHEBI:15361"/>
        <dbReference type="ChEBI" id="CHEBI:15378"/>
        <dbReference type="ChEBI" id="CHEBI:16526"/>
        <dbReference type="ChEBI" id="CHEBI:83099"/>
        <dbReference type="ChEBI" id="CHEBI:83111"/>
        <dbReference type="EC" id="1.2.4.1"/>
    </reaction>
</comment>
<comment type="cofactor">
    <cofactor evidence="1">
        <name>thiamine diphosphate</name>
        <dbReference type="ChEBI" id="CHEBI:58937"/>
    </cofactor>
</comment>
<comment type="subunit">
    <text>Heterodimer of an alpha and a beta chain.</text>
</comment>
<sequence>MAILIKNKVPTTLYQVYDNEGKLIDPNHKITLTDEQLKHAYYLMNLSRMMDKKMLVWQRAGKMLNFAPNLGEEALQVGMGLGLNENDWVCPTFRSGALMLYRGVKPEQLLLYWNGNEKGSQIDAKYKTLPINITIGAQYSHAAGLGYMLHYKKQPNVAVTMIGDGGTAEGEFYEAMNIASIHKWNTVFCINNNQFAISTRTKLESAVSDLSVKAIACGIPRVRVDGNDLIASYEAMQDAANYARGGNGPVLIEFFSYRQGPHTTSDDPSIYRTKQEEEEGMKSDPVKRLRNFLFDRSILNQAQEEEMFSKIEQEIQAAYEKMVLDTPVSVDEVFDYNYQELTPELVEQKQIAKKYFKD</sequence>
<keyword id="KW-0560">Oxidoreductase</keyword>
<keyword id="KW-0670">Pyruvate</keyword>
<keyword id="KW-1185">Reference proteome</keyword>
<keyword id="KW-0786">Thiamine pyrophosphate</keyword>
<evidence type="ECO:0000250" key="1"/>
<name>ODPA_MYCGE</name>
<gene>
    <name type="primary">pdhA</name>
    <name type="ordered locus">MG274</name>
</gene>
<reference key="1">
    <citation type="journal article" date="1995" name="Science">
        <title>The minimal gene complement of Mycoplasma genitalium.</title>
        <authorList>
            <person name="Fraser C.M."/>
            <person name="Gocayne J.D."/>
            <person name="White O."/>
            <person name="Adams M.D."/>
            <person name="Clayton R.A."/>
            <person name="Fleischmann R.D."/>
            <person name="Bult C.J."/>
            <person name="Kerlavage A.R."/>
            <person name="Sutton G.G."/>
            <person name="Kelley J.M."/>
            <person name="Fritchman J.L."/>
            <person name="Weidman J.F."/>
            <person name="Small K.V."/>
            <person name="Sandusky M."/>
            <person name="Fuhrmann J.L."/>
            <person name="Nguyen D.T."/>
            <person name="Utterback T.R."/>
            <person name="Saudek D.M."/>
            <person name="Phillips C.A."/>
            <person name="Merrick J.M."/>
            <person name="Tomb J.-F."/>
            <person name="Dougherty B.A."/>
            <person name="Bott K.F."/>
            <person name="Hu P.-C."/>
            <person name="Lucier T.S."/>
            <person name="Peterson S.N."/>
            <person name="Smith H.O."/>
            <person name="Hutchison C.A. III"/>
            <person name="Venter J.C."/>
        </authorList>
    </citation>
    <scope>NUCLEOTIDE SEQUENCE [LARGE SCALE GENOMIC DNA]</scope>
    <source>
        <strain>ATCC 33530 / DSM 19775 / NCTC 10195 / G37</strain>
    </source>
</reference>
<organism>
    <name type="scientific">Mycoplasma genitalium (strain ATCC 33530 / DSM 19775 / NCTC 10195 / G37)</name>
    <name type="common">Mycoplasmoides genitalium</name>
    <dbReference type="NCBI Taxonomy" id="243273"/>
    <lineage>
        <taxon>Bacteria</taxon>
        <taxon>Bacillati</taxon>
        <taxon>Mycoplasmatota</taxon>
        <taxon>Mycoplasmoidales</taxon>
        <taxon>Mycoplasmoidaceae</taxon>
        <taxon>Mycoplasmoides</taxon>
    </lineage>
</organism>
<dbReference type="EC" id="1.2.4.1"/>
<dbReference type="EMBL" id="L43967">
    <property type="protein sequence ID" value="AAC71496.1"/>
    <property type="molecule type" value="Genomic_DNA"/>
</dbReference>
<dbReference type="PIR" id="C64230">
    <property type="entry name" value="C64230"/>
</dbReference>
<dbReference type="RefSeq" id="WP_009885906.1">
    <property type="nucleotide sequence ID" value="NC_000908.2"/>
</dbReference>
<dbReference type="SMR" id="P47516"/>
<dbReference type="FunCoup" id="P47516">
    <property type="interactions" value="94"/>
</dbReference>
<dbReference type="STRING" id="243273.MG_274"/>
<dbReference type="GeneID" id="88282430"/>
<dbReference type="KEGG" id="mge:MG_274"/>
<dbReference type="eggNOG" id="COG1071">
    <property type="taxonomic scope" value="Bacteria"/>
</dbReference>
<dbReference type="HOGENOM" id="CLU_029393_1_0_14"/>
<dbReference type="InParanoid" id="P47516"/>
<dbReference type="OrthoDB" id="9766715at2"/>
<dbReference type="BioCyc" id="MGEN243273:G1GJ2-332-MONOMER"/>
<dbReference type="Proteomes" id="UP000000807">
    <property type="component" value="Chromosome"/>
</dbReference>
<dbReference type="GO" id="GO:0140032">
    <property type="term" value="F:glycosylation-dependent protein binding"/>
    <property type="evidence" value="ECO:0000353"/>
    <property type="project" value="UniProtKB"/>
</dbReference>
<dbReference type="GO" id="GO:0004739">
    <property type="term" value="F:pyruvate dehydrogenase (acetyl-transferring) activity"/>
    <property type="evidence" value="ECO:0007669"/>
    <property type="project" value="UniProtKB-EC"/>
</dbReference>
<dbReference type="GO" id="GO:0009083">
    <property type="term" value="P:branched-chain amino acid catabolic process"/>
    <property type="evidence" value="ECO:0000318"/>
    <property type="project" value="GO_Central"/>
</dbReference>
<dbReference type="CDD" id="cd02000">
    <property type="entry name" value="TPP_E1_PDC_ADC_BCADC"/>
    <property type="match status" value="1"/>
</dbReference>
<dbReference type="Gene3D" id="3.40.50.970">
    <property type="match status" value="1"/>
</dbReference>
<dbReference type="InterPro" id="IPR050771">
    <property type="entry name" value="Alpha-ketoacid_DH_E1_comp"/>
</dbReference>
<dbReference type="InterPro" id="IPR001017">
    <property type="entry name" value="DH_E1"/>
</dbReference>
<dbReference type="InterPro" id="IPR017596">
    <property type="entry name" value="PdhA/BkdA"/>
</dbReference>
<dbReference type="InterPro" id="IPR029061">
    <property type="entry name" value="THDP-binding"/>
</dbReference>
<dbReference type="NCBIfam" id="TIGR03181">
    <property type="entry name" value="PDH_E1_alph_x"/>
    <property type="match status" value="1"/>
</dbReference>
<dbReference type="PANTHER" id="PTHR43380">
    <property type="entry name" value="2-OXOISOVALERATE DEHYDROGENASE SUBUNIT ALPHA, MITOCHONDRIAL"/>
    <property type="match status" value="1"/>
</dbReference>
<dbReference type="PANTHER" id="PTHR43380:SF1">
    <property type="entry name" value="2-OXOISOVALERATE DEHYDROGENASE SUBUNIT ALPHA, MITOCHONDRIAL"/>
    <property type="match status" value="1"/>
</dbReference>
<dbReference type="Pfam" id="PF00676">
    <property type="entry name" value="E1_dh"/>
    <property type="match status" value="1"/>
</dbReference>
<dbReference type="SUPFAM" id="SSF52518">
    <property type="entry name" value="Thiamin diphosphate-binding fold (THDP-binding)"/>
    <property type="match status" value="1"/>
</dbReference>